<organism>
    <name type="scientific">Rickettsia canadensis (strain McKiel)</name>
    <dbReference type="NCBI Taxonomy" id="293613"/>
    <lineage>
        <taxon>Bacteria</taxon>
        <taxon>Pseudomonadati</taxon>
        <taxon>Pseudomonadota</taxon>
        <taxon>Alphaproteobacteria</taxon>
        <taxon>Rickettsiales</taxon>
        <taxon>Rickettsiaceae</taxon>
        <taxon>Rickettsieae</taxon>
        <taxon>Rickettsia</taxon>
        <taxon>belli group</taxon>
    </lineage>
</organism>
<dbReference type="EC" id="6.1.1.4" evidence="1"/>
<dbReference type="EMBL" id="CP000409">
    <property type="protein sequence ID" value="ABV73585.1"/>
    <property type="molecule type" value="Genomic_DNA"/>
</dbReference>
<dbReference type="RefSeq" id="WP_012148781.1">
    <property type="nucleotide sequence ID" value="NC_009879.1"/>
</dbReference>
<dbReference type="SMR" id="A8EZ02"/>
<dbReference type="STRING" id="293613.A1E_03250"/>
<dbReference type="KEGG" id="rcm:A1E_03250"/>
<dbReference type="eggNOG" id="COG0495">
    <property type="taxonomic scope" value="Bacteria"/>
</dbReference>
<dbReference type="HOGENOM" id="CLU_004427_0_0_5"/>
<dbReference type="Proteomes" id="UP000007056">
    <property type="component" value="Chromosome"/>
</dbReference>
<dbReference type="GO" id="GO:0005737">
    <property type="term" value="C:cytoplasm"/>
    <property type="evidence" value="ECO:0007669"/>
    <property type="project" value="UniProtKB-SubCell"/>
</dbReference>
<dbReference type="GO" id="GO:0002161">
    <property type="term" value="F:aminoacyl-tRNA deacylase activity"/>
    <property type="evidence" value="ECO:0007669"/>
    <property type="project" value="InterPro"/>
</dbReference>
<dbReference type="GO" id="GO:0005524">
    <property type="term" value="F:ATP binding"/>
    <property type="evidence" value="ECO:0007669"/>
    <property type="project" value="UniProtKB-UniRule"/>
</dbReference>
<dbReference type="GO" id="GO:0004823">
    <property type="term" value="F:leucine-tRNA ligase activity"/>
    <property type="evidence" value="ECO:0007669"/>
    <property type="project" value="UniProtKB-UniRule"/>
</dbReference>
<dbReference type="GO" id="GO:0006429">
    <property type="term" value="P:leucyl-tRNA aminoacylation"/>
    <property type="evidence" value="ECO:0007669"/>
    <property type="project" value="UniProtKB-UniRule"/>
</dbReference>
<dbReference type="CDD" id="cd07958">
    <property type="entry name" value="Anticodon_Ia_Leu_BEm"/>
    <property type="match status" value="1"/>
</dbReference>
<dbReference type="CDD" id="cd00812">
    <property type="entry name" value="LeuRS_core"/>
    <property type="match status" value="1"/>
</dbReference>
<dbReference type="FunFam" id="1.10.730.10:FF:000002">
    <property type="entry name" value="Leucine--tRNA ligase"/>
    <property type="match status" value="1"/>
</dbReference>
<dbReference type="FunFam" id="3.40.50.620:FF:000003">
    <property type="entry name" value="Leucine--tRNA ligase"/>
    <property type="match status" value="1"/>
</dbReference>
<dbReference type="FunFam" id="3.40.50.620:FF:000051">
    <property type="entry name" value="Leucine--tRNA ligase"/>
    <property type="match status" value="1"/>
</dbReference>
<dbReference type="Gene3D" id="2.20.28.290">
    <property type="match status" value="1"/>
</dbReference>
<dbReference type="Gene3D" id="3.10.20.590">
    <property type="match status" value="1"/>
</dbReference>
<dbReference type="Gene3D" id="3.40.50.620">
    <property type="entry name" value="HUPs"/>
    <property type="match status" value="2"/>
</dbReference>
<dbReference type="Gene3D" id="1.10.730.10">
    <property type="entry name" value="Isoleucyl-tRNA Synthetase, Domain 1"/>
    <property type="match status" value="1"/>
</dbReference>
<dbReference type="HAMAP" id="MF_00049_B">
    <property type="entry name" value="Leu_tRNA_synth_B"/>
    <property type="match status" value="1"/>
</dbReference>
<dbReference type="InterPro" id="IPR001412">
    <property type="entry name" value="aa-tRNA-synth_I_CS"/>
</dbReference>
<dbReference type="InterPro" id="IPR002300">
    <property type="entry name" value="aa-tRNA-synth_Ia"/>
</dbReference>
<dbReference type="InterPro" id="IPR002302">
    <property type="entry name" value="Leu-tRNA-ligase"/>
</dbReference>
<dbReference type="InterPro" id="IPR025709">
    <property type="entry name" value="Leu_tRNA-synth_edit"/>
</dbReference>
<dbReference type="InterPro" id="IPR013155">
    <property type="entry name" value="M/V/L/I-tRNA-synth_anticd-bd"/>
</dbReference>
<dbReference type="InterPro" id="IPR015413">
    <property type="entry name" value="Methionyl/Leucyl_tRNA_Synth"/>
</dbReference>
<dbReference type="InterPro" id="IPR014729">
    <property type="entry name" value="Rossmann-like_a/b/a_fold"/>
</dbReference>
<dbReference type="InterPro" id="IPR009080">
    <property type="entry name" value="tRNAsynth_Ia_anticodon-bd"/>
</dbReference>
<dbReference type="InterPro" id="IPR009008">
    <property type="entry name" value="Val/Leu/Ile-tRNA-synth_edit"/>
</dbReference>
<dbReference type="NCBIfam" id="TIGR00396">
    <property type="entry name" value="leuS_bact"/>
    <property type="match status" value="1"/>
</dbReference>
<dbReference type="PANTHER" id="PTHR43740:SF2">
    <property type="entry name" value="LEUCINE--TRNA LIGASE, MITOCHONDRIAL"/>
    <property type="match status" value="1"/>
</dbReference>
<dbReference type="PANTHER" id="PTHR43740">
    <property type="entry name" value="LEUCYL-TRNA SYNTHETASE"/>
    <property type="match status" value="1"/>
</dbReference>
<dbReference type="Pfam" id="PF08264">
    <property type="entry name" value="Anticodon_1"/>
    <property type="match status" value="1"/>
</dbReference>
<dbReference type="Pfam" id="PF00133">
    <property type="entry name" value="tRNA-synt_1"/>
    <property type="match status" value="2"/>
</dbReference>
<dbReference type="Pfam" id="PF13603">
    <property type="entry name" value="tRNA-synt_1_2"/>
    <property type="match status" value="1"/>
</dbReference>
<dbReference type="Pfam" id="PF09334">
    <property type="entry name" value="tRNA-synt_1g"/>
    <property type="match status" value="1"/>
</dbReference>
<dbReference type="PRINTS" id="PR00985">
    <property type="entry name" value="TRNASYNTHLEU"/>
</dbReference>
<dbReference type="SUPFAM" id="SSF47323">
    <property type="entry name" value="Anticodon-binding domain of a subclass of class I aminoacyl-tRNA synthetases"/>
    <property type="match status" value="1"/>
</dbReference>
<dbReference type="SUPFAM" id="SSF52374">
    <property type="entry name" value="Nucleotidylyl transferase"/>
    <property type="match status" value="1"/>
</dbReference>
<dbReference type="SUPFAM" id="SSF50677">
    <property type="entry name" value="ValRS/IleRS/LeuRS editing domain"/>
    <property type="match status" value="1"/>
</dbReference>
<dbReference type="PROSITE" id="PS00178">
    <property type="entry name" value="AA_TRNA_LIGASE_I"/>
    <property type="match status" value="1"/>
</dbReference>
<sequence>MNQIEQKWQQIWDDEKAFEVSNECNKPKYYVLEMLPYPSGKIHVGHVRNYSIGDVIARFMNMQGFNVLHPMGWDAFGLPAENAAIKNNVHPKEWTYSNVDNMQQQLKSMGFAYDWSRVINSCDPQYYKYEQKFFLELYERNLAYQKEALVNWDPVDNTVLANEQVVDGRGWRSGAIIEKRYLKQWFLKITDYAEELLNEIKNLKEWPEAVRSMQEKWIGKSIGANFYFKVKDNEDAIIEVFSTKPETIFGASFIGIAFNHPIIEKLISKTPEISNFITKCLHITGSSELEKAEKDGILTSLYVIHPFDPSIILPVIITNFVLMDYGTGAIFGCPAHDERDHELAVKMNLPIKQVIEADIDVHKIAYTEDGILINSDFLNGLTNNEAKQKVIKEIEKLQIGKRSINYRLKDWGISRQRFWGCPIPMIYCKVCDIVPVPYKDLPVTLPDNVKFNGHGNPLDHHPTWKHVNCPKCDKPAIRETDTFDTFFESSWYFTRYCNSHATDMTDKKACDYWLPVDKYIGGIEHAVMHLLYARFFTKVMNEQNYVSVREPFKGLFTQGMVLHATYKDEHNNWLYPDEVVKKDNKFFHKKSGNLVVQGRIEKMSKSKKNLIDLETMQKQYGADAIRLFVLSDSPPEKDLEWSVSGLEGCSRFINKLEHMFKVIASLKDDVTGINKELNRLVHLTIKYVAEDIKHFALNRAIARMRELSNAISSEFSKEVMDVKTVKYGFNVLVQLLNPFIPHITEEIWQKLGNKERLYKTAFPAFDESMLELDTYVMAVQVNGKLRDTYEFNNSASDYEIKQITINLPKVQKFLEGTEPKKIIFVPRKIVNIIV</sequence>
<reference key="1">
    <citation type="submission" date="2007-09" db="EMBL/GenBank/DDBJ databases">
        <title>Complete genome sequence of Rickettsia canadensis.</title>
        <authorList>
            <person name="Madan A."/>
            <person name="Fahey J."/>
            <person name="Helton E."/>
            <person name="Ketteman M."/>
            <person name="Madan A."/>
            <person name="Rodrigues S."/>
            <person name="Sanchez A."/>
            <person name="Whiting M."/>
            <person name="Dasch G."/>
            <person name="Eremeeva M."/>
        </authorList>
    </citation>
    <scope>NUCLEOTIDE SEQUENCE [LARGE SCALE GENOMIC DNA]</scope>
    <source>
        <strain>McKiel</strain>
    </source>
</reference>
<keyword id="KW-0030">Aminoacyl-tRNA synthetase</keyword>
<keyword id="KW-0067">ATP-binding</keyword>
<keyword id="KW-0963">Cytoplasm</keyword>
<keyword id="KW-0436">Ligase</keyword>
<keyword id="KW-0547">Nucleotide-binding</keyword>
<keyword id="KW-0648">Protein biosynthesis</keyword>
<comment type="catalytic activity">
    <reaction evidence="1">
        <text>tRNA(Leu) + L-leucine + ATP = L-leucyl-tRNA(Leu) + AMP + diphosphate</text>
        <dbReference type="Rhea" id="RHEA:11688"/>
        <dbReference type="Rhea" id="RHEA-COMP:9613"/>
        <dbReference type="Rhea" id="RHEA-COMP:9622"/>
        <dbReference type="ChEBI" id="CHEBI:30616"/>
        <dbReference type="ChEBI" id="CHEBI:33019"/>
        <dbReference type="ChEBI" id="CHEBI:57427"/>
        <dbReference type="ChEBI" id="CHEBI:78442"/>
        <dbReference type="ChEBI" id="CHEBI:78494"/>
        <dbReference type="ChEBI" id="CHEBI:456215"/>
        <dbReference type="EC" id="6.1.1.4"/>
    </reaction>
</comment>
<comment type="subcellular location">
    <subcellularLocation>
        <location evidence="1">Cytoplasm</location>
    </subcellularLocation>
</comment>
<comment type="similarity">
    <text evidence="1">Belongs to the class-I aminoacyl-tRNA synthetase family.</text>
</comment>
<accession>A8EZ02</accession>
<feature type="chain" id="PRO_1000009417" description="Leucine--tRNA ligase">
    <location>
        <begin position="1"/>
        <end position="834"/>
    </location>
</feature>
<feature type="short sequence motif" description="'HIGH' region">
    <location>
        <begin position="36"/>
        <end position="46"/>
    </location>
</feature>
<feature type="short sequence motif" description="'KMSKS' region">
    <location>
        <begin position="602"/>
        <end position="606"/>
    </location>
</feature>
<feature type="binding site" evidence="1">
    <location>
        <position position="605"/>
    </location>
    <ligand>
        <name>ATP</name>
        <dbReference type="ChEBI" id="CHEBI:30616"/>
    </ligand>
</feature>
<proteinExistence type="inferred from homology"/>
<name>SYL_RICCK</name>
<protein>
    <recommendedName>
        <fullName evidence="1">Leucine--tRNA ligase</fullName>
        <ecNumber evidence="1">6.1.1.4</ecNumber>
    </recommendedName>
    <alternativeName>
        <fullName evidence="1">Leucyl-tRNA synthetase</fullName>
        <shortName evidence="1">LeuRS</shortName>
    </alternativeName>
</protein>
<evidence type="ECO:0000255" key="1">
    <source>
        <dbReference type="HAMAP-Rule" id="MF_00049"/>
    </source>
</evidence>
<gene>
    <name evidence="1" type="primary">leuS</name>
    <name type="ordered locus">A1E_03250</name>
</gene>